<reference key="1">
    <citation type="journal article" date="2007" name="Mol. Phylogenet. Evol.">
        <title>Phylogenetic and evolutionary implications of complete chloroplast genome sequences of four early-diverging angiosperms: Buxus (Buxaceae), Chloranthus (Chloranthaceae), Dioscorea (Dioscoreaceae), and Illicium (Schisandraceae).</title>
        <authorList>
            <person name="Hansen D.R."/>
            <person name="Dastidar S.G."/>
            <person name="Cai Z."/>
            <person name="Penaflor C."/>
            <person name="Kuehl J.V."/>
            <person name="Boore J.L."/>
            <person name="Jansen R.K."/>
        </authorList>
    </citation>
    <scope>NUCLEOTIDE SEQUENCE [LARGE SCALE GENOMIC DNA]</scope>
</reference>
<evidence type="ECO:0000255" key="1">
    <source>
        <dbReference type="HAMAP-Rule" id="MF_00439"/>
    </source>
</evidence>
<feature type="chain" id="PRO_0000325064" description="Photosystem I assembly protein Ycf3">
    <location>
        <begin position="1"/>
        <end position="168"/>
    </location>
</feature>
<feature type="repeat" description="TPR 1">
    <location>
        <begin position="35"/>
        <end position="68"/>
    </location>
</feature>
<feature type="repeat" description="TPR 2">
    <location>
        <begin position="72"/>
        <end position="105"/>
    </location>
</feature>
<feature type="repeat" description="TPR 3">
    <location>
        <begin position="120"/>
        <end position="153"/>
    </location>
</feature>
<comment type="function">
    <text evidence="1">Essential for the assembly of the photosystem I (PSI) complex. May act as a chaperone-like factor to guide the assembly of the PSI subunits.</text>
</comment>
<comment type="subcellular location">
    <subcellularLocation>
        <location evidence="1">Plastid</location>
        <location evidence="1">Chloroplast thylakoid membrane</location>
        <topology evidence="1">Peripheral membrane protein</topology>
    </subcellularLocation>
</comment>
<comment type="similarity">
    <text evidence="1">Belongs to the Ycf3 family.</text>
</comment>
<accession>A6MMU5</accession>
<protein>
    <recommendedName>
        <fullName evidence="1">Photosystem I assembly protein Ycf3</fullName>
    </recommendedName>
</protein>
<keyword id="KW-0150">Chloroplast</keyword>
<keyword id="KW-0472">Membrane</keyword>
<keyword id="KW-0602">Photosynthesis</keyword>
<keyword id="KW-0934">Plastid</keyword>
<keyword id="KW-0677">Repeat</keyword>
<keyword id="KW-0793">Thylakoid</keyword>
<keyword id="KW-0802">TPR repeat</keyword>
<sequence>MSRSRINGNFIDKTSSIVANILLRIIPTTSGEKEAFTYYRDGMSAQSEGNYAEALQNYYEATRPEIDPYDRSYILYNIGLIHTSNGEHTKALEYYFRALERNPFLPQAFNNMAVICHYRGEQAIRQGDSEIAEAWSDQAAEYWKQAIALTPGNYIEAQNWLKITRRFE</sequence>
<dbReference type="EMBL" id="EF380354">
    <property type="protein sequence ID" value="ABQ52520.1"/>
    <property type="molecule type" value="Genomic_DNA"/>
</dbReference>
<dbReference type="RefSeq" id="YP_001294271.1">
    <property type="nucleotide sequence ID" value="NC_009600.1"/>
</dbReference>
<dbReference type="SMR" id="A6MMU5"/>
<dbReference type="GeneID" id="5236803"/>
<dbReference type="GO" id="GO:0009535">
    <property type="term" value="C:chloroplast thylakoid membrane"/>
    <property type="evidence" value="ECO:0007669"/>
    <property type="project" value="UniProtKB-SubCell"/>
</dbReference>
<dbReference type="GO" id="GO:0015979">
    <property type="term" value="P:photosynthesis"/>
    <property type="evidence" value="ECO:0007669"/>
    <property type="project" value="UniProtKB-UniRule"/>
</dbReference>
<dbReference type="FunFam" id="1.25.40.10:FF:000004">
    <property type="entry name" value="Photosystem I assembly protein Ycf3"/>
    <property type="match status" value="1"/>
</dbReference>
<dbReference type="Gene3D" id="1.25.40.10">
    <property type="entry name" value="Tetratricopeptide repeat domain"/>
    <property type="match status" value="1"/>
</dbReference>
<dbReference type="HAMAP" id="MF_00439">
    <property type="entry name" value="Ycf3"/>
    <property type="match status" value="1"/>
</dbReference>
<dbReference type="InterPro" id="IPR022818">
    <property type="entry name" value="PSI_Ycf3_assembly"/>
</dbReference>
<dbReference type="InterPro" id="IPR011990">
    <property type="entry name" value="TPR-like_helical_dom_sf"/>
</dbReference>
<dbReference type="InterPro" id="IPR019734">
    <property type="entry name" value="TPR_rpt"/>
</dbReference>
<dbReference type="InterPro" id="IPR051685">
    <property type="entry name" value="Ycf3/AcsC/BcsC/TPR_MFPF"/>
</dbReference>
<dbReference type="NCBIfam" id="NF002725">
    <property type="entry name" value="PRK02603.1"/>
    <property type="match status" value="1"/>
</dbReference>
<dbReference type="PANTHER" id="PTHR44943">
    <property type="entry name" value="CELLULOSE SYNTHASE OPERON PROTEIN C"/>
    <property type="match status" value="1"/>
</dbReference>
<dbReference type="PANTHER" id="PTHR44943:SF8">
    <property type="entry name" value="TPR REPEAT-CONTAINING PROTEIN MJ0263"/>
    <property type="match status" value="1"/>
</dbReference>
<dbReference type="Pfam" id="PF00515">
    <property type="entry name" value="TPR_1"/>
    <property type="match status" value="1"/>
</dbReference>
<dbReference type="SMART" id="SM00028">
    <property type="entry name" value="TPR"/>
    <property type="match status" value="3"/>
</dbReference>
<dbReference type="SUPFAM" id="SSF48452">
    <property type="entry name" value="TPR-like"/>
    <property type="match status" value="1"/>
</dbReference>
<dbReference type="PROSITE" id="PS50005">
    <property type="entry name" value="TPR"/>
    <property type="match status" value="3"/>
</dbReference>
<dbReference type="PROSITE" id="PS50293">
    <property type="entry name" value="TPR_REGION"/>
    <property type="match status" value="1"/>
</dbReference>
<gene>
    <name evidence="1" type="primary">ycf3</name>
</gene>
<geneLocation type="chloroplast"/>
<organism>
    <name type="scientific">Illicium oligandrum</name>
    <name type="common">Star anise</name>
    <dbReference type="NCBI Taxonomy" id="145286"/>
    <lineage>
        <taxon>Eukaryota</taxon>
        <taxon>Viridiplantae</taxon>
        <taxon>Streptophyta</taxon>
        <taxon>Embryophyta</taxon>
        <taxon>Tracheophyta</taxon>
        <taxon>Spermatophyta</taxon>
        <taxon>Magnoliopsida</taxon>
        <taxon>Austrobaileyales</taxon>
        <taxon>Schisandraceae</taxon>
        <taxon>Illicium</taxon>
    </lineage>
</organism>
<name>YCF3_ILLOL</name>
<proteinExistence type="inferred from homology"/>